<organism>
    <name type="scientific">Pseudomonas fluorescens (strain Pf0-1)</name>
    <dbReference type="NCBI Taxonomy" id="205922"/>
    <lineage>
        <taxon>Bacteria</taxon>
        <taxon>Pseudomonadati</taxon>
        <taxon>Pseudomonadota</taxon>
        <taxon>Gammaproteobacteria</taxon>
        <taxon>Pseudomonadales</taxon>
        <taxon>Pseudomonadaceae</taxon>
        <taxon>Pseudomonas</taxon>
    </lineage>
</organism>
<accession>Q3K8Y4</accession>
<reference key="1">
    <citation type="journal article" date="2009" name="Genome Biol.">
        <title>Genomic and genetic analyses of diversity and plant interactions of Pseudomonas fluorescens.</title>
        <authorList>
            <person name="Silby M.W."/>
            <person name="Cerdeno-Tarraga A.M."/>
            <person name="Vernikos G.S."/>
            <person name="Giddens S.R."/>
            <person name="Jackson R.W."/>
            <person name="Preston G.M."/>
            <person name="Zhang X.-X."/>
            <person name="Moon C.D."/>
            <person name="Gehrig S.M."/>
            <person name="Godfrey S.A.C."/>
            <person name="Knight C.G."/>
            <person name="Malone J.G."/>
            <person name="Robinson Z."/>
            <person name="Spiers A.J."/>
            <person name="Harris S."/>
            <person name="Challis G.L."/>
            <person name="Yaxley A.M."/>
            <person name="Harris D."/>
            <person name="Seeger K."/>
            <person name="Murphy L."/>
            <person name="Rutter S."/>
            <person name="Squares R."/>
            <person name="Quail M.A."/>
            <person name="Saunders E."/>
            <person name="Mavromatis K."/>
            <person name="Brettin T.S."/>
            <person name="Bentley S.D."/>
            <person name="Hothersall J."/>
            <person name="Stephens E."/>
            <person name="Thomas C.M."/>
            <person name="Parkhill J."/>
            <person name="Levy S.B."/>
            <person name="Rainey P.B."/>
            <person name="Thomson N.R."/>
        </authorList>
    </citation>
    <scope>NUCLEOTIDE SEQUENCE [LARGE SCALE GENOMIC DNA]</scope>
    <source>
        <strain>Pf0-1</strain>
    </source>
</reference>
<protein>
    <recommendedName>
        <fullName evidence="1">Potassium-transporting ATPase potassium-binding subunit</fullName>
    </recommendedName>
    <alternativeName>
        <fullName evidence="1">ATP phosphohydrolase [potassium-transporting] A chain</fullName>
    </alternativeName>
    <alternativeName>
        <fullName evidence="1">Potassium-binding and translocating subunit A</fullName>
    </alternativeName>
    <alternativeName>
        <fullName evidence="1">Potassium-translocating ATPase A chain</fullName>
    </alternativeName>
</protein>
<gene>
    <name evidence="1" type="primary">kdpA</name>
    <name type="ordered locus">Pfl01_4033</name>
</gene>
<keyword id="KW-0997">Cell inner membrane</keyword>
<keyword id="KW-1003">Cell membrane</keyword>
<keyword id="KW-0406">Ion transport</keyword>
<keyword id="KW-0472">Membrane</keyword>
<keyword id="KW-0630">Potassium</keyword>
<keyword id="KW-0633">Potassium transport</keyword>
<keyword id="KW-0812">Transmembrane</keyword>
<keyword id="KW-1133">Transmembrane helix</keyword>
<keyword id="KW-0813">Transport</keyword>
<name>KDPA_PSEPF</name>
<proteinExistence type="inferred from homology"/>
<sequence>MHSYDYWLILAFFAVVLLPAPFLGRFYYKVMEGQSTWLTPILGPVERGCYRIAGVNPQDEQSWQKYTLALLAFNLAGFLLLFAILLFQDHLPLNPQNLPGQEWTLAFNTAVSFMTNTNWQAYSGEASLSYLSQMVGLTVQNFVSAATGLAVLVALCRGIGRKSTKTLGNFWVDMTRATLYGLLPLCLLLALYLVWQGVPQTFAQYVNAVTMQGVDQVIPLGPAASQIAIKQLGTNGGGFFGVNSAHPFENPTAWSNLFEVASIILIPVALVFTFGHYVKDLRQSRAIIGCMLALFIIGGATSLWAEYQPNPALNNVTVEQAAPLEGKEARFGTTATVLWSVTTTAASNGSVNGMHDSLNPLSGMVALVNMMVGEVIFGGVGAGLYGMLLNVLIAVFLAGLMIGRTPEYLGKKLQAREVQLLVVTLLVMPVGVLVLGAIAASLPGPVAAVSNPGPHGFSQLLYAYTSASANNGSAFGGFGANTAFHNLMLGLGMLIGRFGYILPVLALAGSLAMKKTAPIGQNSFPTHGPLFVTLLTVTILLLGGLTFLPTLALGPIAEHLSMGF</sequence>
<dbReference type="EMBL" id="CP000094">
    <property type="protein sequence ID" value="ABA75770.1"/>
    <property type="molecule type" value="Genomic_DNA"/>
</dbReference>
<dbReference type="RefSeq" id="WP_011335330.1">
    <property type="nucleotide sequence ID" value="NC_007492.2"/>
</dbReference>
<dbReference type="SMR" id="Q3K8Y4"/>
<dbReference type="KEGG" id="pfo:Pfl01_4033"/>
<dbReference type="eggNOG" id="COG2060">
    <property type="taxonomic scope" value="Bacteria"/>
</dbReference>
<dbReference type="HOGENOM" id="CLU_018614_3_0_6"/>
<dbReference type="Proteomes" id="UP000002704">
    <property type="component" value="Chromosome"/>
</dbReference>
<dbReference type="GO" id="GO:0005886">
    <property type="term" value="C:plasma membrane"/>
    <property type="evidence" value="ECO:0007669"/>
    <property type="project" value="UniProtKB-SubCell"/>
</dbReference>
<dbReference type="GO" id="GO:0008556">
    <property type="term" value="F:P-type potassium transmembrane transporter activity"/>
    <property type="evidence" value="ECO:0007669"/>
    <property type="project" value="InterPro"/>
</dbReference>
<dbReference type="GO" id="GO:0030955">
    <property type="term" value="F:potassium ion binding"/>
    <property type="evidence" value="ECO:0007669"/>
    <property type="project" value="UniProtKB-UniRule"/>
</dbReference>
<dbReference type="HAMAP" id="MF_00275">
    <property type="entry name" value="KdpA"/>
    <property type="match status" value="1"/>
</dbReference>
<dbReference type="InterPro" id="IPR004623">
    <property type="entry name" value="KdpA"/>
</dbReference>
<dbReference type="NCBIfam" id="TIGR00680">
    <property type="entry name" value="kdpA"/>
    <property type="match status" value="1"/>
</dbReference>
<dbReference type="PANTHER" id="PTHR30607">
    <property type="entry name" value="POTASSIUM-TRANSPORTING ATPASE A CHAIN"/>
    <property type="match status" value="1"/>
</dbReference>
<dbReference type="PANTHER" id="PTHR30607:SF2">
    <property type="entry name" value="POTASSIUM-TRANSPORTING ATPASE POTASSIUM-BINDING SUBUNIT"/>
    <property type="match status" value="1"/>
</dbReference>
<dbReference type="Pfam" id="PF03814">
    <property type="entry name" value="KdpA"/>
    <property type="match status" value="1"/>
</dbReference>
<dbReference type="PIRSF" id="PIRSF001294">
    <property type="entry name" value="K_ATPaseA"/>
    <property type="match status" value="1"/>
</dbReference>
<evidence type="ECO:0000255" key="1">
    <source>
        <dbReference type="HAMAP-Rule" id="MF_00275"/>
    </source>
</evidence>
<feature type="chain" id="PRO_1000022241" description="Potassium-transporting ATPase potassium-binding subunit">
    <location>
        <begin position="1"/>
        <end position="564"/>
    </location>
</feature>
<feature type="transmembrane region" description="Helical" evidence="1">
    <location>
        <begin position="4"/>
        <end position="24"/>
    </location>
</feature>
<feature type="transmembrane region" description="Helical" evidence="1">
    <location>
        <begin position="67"/>
        <end position="87"/>
    </location>
</feature>
<feature type="transmembrane region" description="Helical" evidence="1">
    <location>
        <begin position="135"/>
        <end position="155"/>
    </location>
</feature>
<feature type="transmembrane region" description="Helical" evidence="1">
    <location>
        <begin position="179"/>
        <end position="199"/>
    </location>
</feature>
<feature type="transmembrane region" description="Helical" evidence="1">
    <location>
        <begin position="258"/>
        <end position="278"/>
    </location>
</feature>
<feature type="transmembrane region" description="Helical" evidence="1">
    <location>
        <begin position="286"/>
        <end position="306"/>
    </location>
</feature>
<feature type="transmembrane region" description="Helical" evidence="1">
    <location>
        <begin position="382"/>
        <end position="402"/>
    </location>
</feature>
<feature type="transmembrane region" description="Helical" evidence="1">
    <location>
        <begin position="420"/>
        <end position="440"/>
    </location>
</feature>
<feature type="transmembrane region" description="Helical" evidence="1">
    <location>
        <begin position="487"/>
        <end position="507"/>
    </location>
</feature>
<feature type="transmembrane region" description="Helical" evidence="1">
    <location>
        <begin position="528"/>
        <end position="548"/>
    </location>
</feature>
<comment type="function">
    <text evidence="1">Part of the high-affinity ATP-driven potassium transport (or Kdp) system, which catalyzes the hydrolysis of ATP coupled with the electrogenic transport of potassium into the cytoplasm. This subunit binds the periplasmic potassium ions and delivers the ions to the membrane domain of KdpB through an intramembrane tunnel.</text>
</comment>
<comment type="subunit">
    <text evidence="1">The system is composed of three essential subunits: KdpA, KdpB and KdpC.</text>
</comment>
<comment type="subcellular location">
    <subcellularLocation>
        <location evidence="1">Cell inner membrane</location>
        <topology evidence="1">Multi-pass membrane protein</topology>
    </subcellularLocation>
</comment>
<comment type="similarity">
    <text evidence="1">Belongs to the KdpA family.</text>
</comment>